<evidence type="ECO:0000250" key="1"/>
<evidence type="ECO:0000256" key="2">
    <source>
        <dbReference type="SAM" id="MobiDB-lite"/>
    </source>
</evidence>
<evidence type="ECO:0000305" key="3"/>
<organism>
    <name type="scientific">Mycolicibacterium smegmatis (strain ATCC 700084 / mc(2)155)</name>
    <name type="common">Mycobacterium smegmatis</name>
    <dbReference type="NCBI Taxonomy" id="246196"/>
    <lineage>
        <taxon>Bacteria</taxon>
        <taxon>Bacillati</taxon>
        <taxon>Actinomycetota</taxon>
        <taxon>Actinomycetes</taxon>
        <taxon>Mycobacteriales</taxon>
        <taxon>Mycobacteriaceae</taxon>
        <taxon>Mycolicibacterium</taxon>
    </lineage>
</organism>
<comment type="function">
    <text evidence="1">Modulates RecA activity.</text>
</comment>
<comment type="subcellular location">
    <subcellularLocation>
        <location evidence="3">Cytoplasm</location>
    </subcellularLocation>
</comment>
<comment type="similarity">
    <text evidence="3">Belongs to the RecX family.</text>
</comment>
<dbReference type="EMBL" id="X99208">
    <property type="protein sequence ID" value="CAA67596.2"/>
    <property type="molecule type" value="Genomic_DNA"/>
</dbReference>
<dbReference type="EMBL" id="CP000480">
    <property type="protein sequence ID" value="ABK76176.1"/>
    <property type="molecule type" value="Genomic_DNA"/>
</dbReference>
<dbReference type="EMBL" id="CP001663">
    <property type="protein sequence ID" value="AFP39125.1"/>
    <property type="molecule type" value="Genomic_DNA"/>
</dbReference>
<dbReference type="RefSeq" id="WP_003894108.1">
    <property type="nucleotide sequence ID" value="NZ_SIJM01000032.1"/>
</dbReference>
<dbReference type="RefSeq" id="YP_887058.1">
    <property type="nucleotide sequence ID" value="NC_008596.1"/>
</dbReference>
<dbReference type="SMR" id="P94965"/>
<dbReference type="STRING" id="246196.MSMEG_2724"/>
<dbReference type="PaxDb" id="246196-MSMEI_2657"/>
<dbReference type="GeneID" id="93457507"/>
<dbReference type="KEGG" id="msb:LJ00_13545"/>
<dbReference type="KEGG" id="msg:MSMEI_2657"/>
<dbReference type="KEGG" id="msm:MSMEG_2724"/>
<dbReference type="PATRIC" id="fig|246196.19.peg.2691"/>
<dbReference type="eggNOG" id="COG2137">
    <property type="taxonomic scope" value="Bacteria"/>
</dbReference>
<dbReference type="OrthoDB" id="5244465at2"/>
<dbReference type="Proteomes" id="UP000000757">
    <property type="component" value="Chromosome"/>
</dbReference>
<dbReference type="Proteomes" id="UP000006158">
    <property type="component" value="Chromosome"/>
</dbReference>
<dbReference type="GO" id="GO:0005737">
    <property type="term" value="C:cytoplasm"/>
    <property type="evidence" value="ECO:0007669"/>
    <property type="project" value="UniProtKB-SubCell"/>
</dbReference>
<dbReference type="GO" id="GO:0006282">
    <property type="term" value="P:regulation of DNA repair"/>
    <property type="evidence" value="ECO:0007669"/>
    <property type="project" value="UniProtKB-UniRule"/>
</dbReference>
<dbReference type="Gene3D" id="1.10.10.10">
    <property type="entry name" value="Winged helix-like DNA-binding domain superfamily/Winged helix DNA-binding domain"/>
    <property type="match status" value="2"/>
</dbReference>
<dbReference type="HAMAP" id="MF_01114">
    <property type="entry name" value="RecX"/>
    <property type="match status" value="1"/>
</dbReference>
<dbReference type="InterPro" id="IPR053926">
    <property type="entry name" value="RecX_HTH_1st"/>
</dbReference>
<dbReference type="InterPro" id="IPR053924">
    <property type="entry name" value="RecX_HTH_2nd"/>
</dbReference>
<dbReference type="InterPro" id="IPR003783">
    <property type="entry name" value="Regulatory_RecX"/>
</dbReference>
<dbReference type="InterPro" id="IPR036388">
    <property type="entry name" value="WH-like_DNA-bd_sf"/>
</dbReference>
<dbReference type="NCBIfam" id="NF001056">
    <property type="entry name" value="PRK00117.3-1"/>
    <property type="match status" value="1"/>
</dbReference>
<dbReference type="PANTHER" id="PTHR33602">
    <property type="entry name" value="REGULATORY PROTEIN RECX FAMILY PROTEIN"/>
    <property type="match status" value="1"/>
</dbReference>
<dbReference type="PANTHER" id="PTHR33602:SF1">
    <property type="entry name" value="REGULATORY PROTEIN RECX FAMILY PROTEIN"/>
    <property type="match status" value="1"/>
</dbReference>
<dbReference type="Pfam" id="PF21982">
    <property type="entry name" value="RecX_HTH1"/>
    <property type="match status" value="1"/>
</dbReference>
<dbReference type="Pfam" id="PF02631">
    <property type="entry name" value="RecX_HTH2"/>
    <property type="match status" value="1"/>
</dbReference>
<sequence>MTSSRPRLTSEPSDVPDGEQAQDPRTREEQAKNVCLRLLTVRARTRAELETQLTKRGYPDDVSARVLDRLTEVGLIDDEDFAEQWVRSRHLNAGKGKRALAVELRKKGVDDEVISSALADLDPAAERQRAEQLVRDKLRRERLDGTPENDVKVTRRLVGMLARRGYNQSMAYDVVSVELANERERRRV</sequence>
<reference key="1">
    <citation type="journal article" date="1997" name="Mol. Microbiol.">
        <title>Mycobacterial recA is cotranscribed with a potential regulatory gene called recX.</title>
        <authorList>
            <person name="Papavinasasundaram K.G."/>
            <person name="Movahedzadeh F."/>
            <person name="Keer J.T."/>
            <person name="Stoker N.G."/>
            <person name="Colston M.J."/>
            <person name="Davis E.O."/>
        </authorList>
    </citation>
    <scope>NUCLEOTIDE SEQUENCE [GENOMIC DNA]</scope>
</reference>
<reference key="2">
    <citation type="submission" date="2001-01" db="EMBL/GenBank/DDBJ databases">
        <authorList>
            <person name="Papavinasasundaram K.G."/>
        </authorList>
    </citation>
    <scope>SEQUENCE REVISION TO C-TERMINUS</scope>
</reference>
<reference key="3">
    <citation type="submission" date="2006-10" db="EMBL/GenBank/DDBJ databases">
        <authorList>
            <person name="Fleischmann R.D."/>
            <person name="Dodson R.J."/>
            <person name="Haft D.H."/>
            <person name="Merkel J.S."/>
            <person name="Nelson W.C."/>
            <person name="Fraser C.M."/>
        </authorList>
    </citation>
    <scope>NUCLEOTIDE SEQUENCE [LARGE SCALE GENOMIC DNA]</scope>
    <source>
        <strain>ATCC 700084 / mc(2)155</strain>
    </source>
</reference>
<reference key="4">
    <citation type="journal article" date="2007" name="Genome Biol.">
        <title>Interrupted coding sequences in Mycobacterium smegmatis: authentic mutations or sequencing errors?</title>
        <authorList>
            <person name="Deshayes C."/>
            <person name="Perrodou E."/>
            <person name="Gallien S."/>
            <person name="Euphrasie D."/>
            <person name="Schaeffer C."/>
            <person name="Van-Dorsselaer A."/>
            <person name="Poch O."/>
            <person name="Lecompte O."/>
            <person name="Reyrat J.-M."/>
        </authorList>
    </citation>
    <scope>NUCLEOTIDE SEQUENCE [LARGE SCALE GENOMIC DNA]</scope>
    <source>
        <strain>ATCC 700084 / mc(2)155</strain>
    </source>
</reference>
<reference key="5">
    <citation type="journal article" date="2009" name="Genome Res.">
        <title>Ortho-proteogenomics: multiple proteomes investigation through orthology and a new MS-based protocol.</title>
        <authorList>
            <person name="Gallien S."/>
            <person name="Perrodou E."/>
            <person name="Carapito C."/>
            <person name="Deshayes C."/>
            <person name="Reyrat J.-M."/>
            <person name="Van Dorsselaer A."/>
            <person name="Poch O."/>
            <person name="Schaeffer C."/>
            <person name="Lecompte O."/>
        </authorList>
    </citation>
    <scope>NUCLEOTIDE SEQUENCE [LARGE SCALE GENOMIC DNA]</scope>
    <source>
        <strain>ATCC 700084 / mc(2)155</strain>
    </source>
</reference>
<protein>
    <recommendedName>
        <fullName>Regulatory protein RecX</fullName>
    </recommendedName>
</protein>
<feature type="chain" id="PRO_0000162449" description="Regulatory protein RecX">
    <location>
        <begin position="1"/>
        <end position="188"/>
    </location>
</feature>
<feature type="region of interest" description="Disordered" evidence="2">
    <location>
        <begin position="1"/>
        <end position="30"/>
    </location>
</feature>
<feature type="compositionally biased region" description="Polar residues" evidence="2">
    <location>
        <begin position="1"/>
        <end position="12"/>
    </location>
</feature>
<name>RECX_MYCS2</name>
<gene>
    <name type="primary">recX</name>
    <name type="ordered locus">MSMEG_2724</name>
    <name type="ordered locus">MSMEI_2657</name>
</gene>
<proteinExistence type="inferred from homology"/>
<keyword id="KW-0963">Cytoplasm</keyword>
<keyword id="KW-1185">Reference proteome</keyword>
<accession>P94965</accession>
<accession>A0QVX0</accession>
<accession>I7FC66</accession>